<sequence>MSRKPFIAGNWKMNKNPEEAKAFVEAVASKLPSADLVEAGIAVPAVDLTTVIAAAKGSNLKVAAQNTYFENSGAFTGETSPQVLKEIGTDYVVIGHSERRDYFHETDEDINKKAKAIFANGMIPIICCGESLETYEAGKAAEFVGAQVSAALAGLTPEQVASSVIAYEPIWAIGTGKSASQDDAQKMCKVVRDVVAADFGQEVADKVRVLYGGSVKPENVAEYMACPDVDGALVGGASLEPESFLALLDFVK</sequence>
<reference key="1">
    <citation type="submission" date="2001-11" db="EMBL/GenBank/DDBJ databases">
        <title>Modulation of glycolysis by lactose availability in Streptococcus thermophilus.</title>
        <authorList>
            <person name="van den Bogaard P.T.C."/>
            <person name="Kleerebezem M."/>
            <person name="Hols P."/>
            <person name="Crispie F."/>
            <person name="Kuipers O.P."/>
            <person name="de Vos W.M."/>
        </authorList>
    </citation>
    <scope>NUCLEOTIDE SEQUENCE [GENOMIC DNA]</scope>
</reference>
<reference key="2">
    <citation type="journal article" date="2004" name="Nat. Biotechnol.">
        <title>Complete sequence and comparative genome analysis of the dairy bacterium Streptococcus thermophilus.</title>
        <authorList>
            <person name="Bolotin A."/>
            <person name="Quinquis B."/>
            <person name="Renault P."/>
            <person name="Sorokin A."/>
            <person name="Ehrlich S.D."/>
            <person name="Kulakauskas S."/>
            <person name="Lapidus A."/>
            <person name="Goltsman E."/>
            <person name="Mazur M."/>
            <person name="Pusch G.D."/>
            <person name="Fonstein M."/>
            <person name="Overbeek R."/>
            <person name="Kyprides N."/>
            <person name="Purnelle B."/>
            <person name="Prozzi D."/>
            <person name="Ngui K."/>
            <person name="Masuy D."/>
            <person name="Hancy F."/>
            <person name="Burteau S."/>
            <person name="Boutry M."/>
            <person name="Delcour J."/>
            <person name="Goffeau A."/>
            <person name="Hols P."/>
        </authorList>
    </citation>
    <scope>NUCLEOTIDE SEQUENCE [LARGE SCALE GENOMIC DNA]</scope>
    <source>
        <strain>ATCC BAA-250 / LMG 18311</strain>
    </source>
</reference>
<proteinExistence type="inferred from homology"/>
<evidence type="ECO:0000255" key="1">
    <source>
        <dbReference type="HAMAP-Rule" id="MF_00147"/>
    </source>
</evidence>
<evidence type="ECO:0000305" key="2"/>
<protein>
    <recommendedName>
        <fullName evidence="1">Triosephosphate isomerase</fullName>
        <shortName evidence="1">TIM</shortName>
        <shortName evidence="1">TPI</shortName>
        <ecNumber evidence="1">5.3.1.1</ecNumber>
    </recommendedName>
    <alternativeName>
        <fullName evidence="1">Triose-phosphate isomerase</fullName>
    </alternativeName>
</protein>
<gene>
    <name evidence="1" type="primary">tpiA</name>
    <name type="synonym">tpi</name>
    <name type="ordered locus">stu0488</name>
</gene>
<accession>Q8VVC1</accession>
<accession>Q5M5I7</accession>
<comment type="function">
    <text evidence="1">Involved in the gluconeogenesis. Catalyzes stereospecifically the conversion of dihydroxyacetone phosphate (DHAP) to D-glyceraldehyde-3-phosphate (G3P).</text>
</comment>
<comment type="catalytic activity">
    <reaction evidence="1">
        <text>D-glyceraldehyde 3-phosphate = dihydroxyacetone phosphate</text>
        <dbReference type="Rhea" id="RHEA:18585"/>
        <dbReference type="ChEBI" id="CHEBI:57642"/>
        <dbReference type="ChEBI" id="CHEBI:59776"/>
        <dbReference type="EC" id="5.3.1.1"/>
    </reaction>
</comment>
<comment type="pathway">
    <text evidence="1">Carbohydrate biosynthesis; gluconeogenesis.</text>
</comment>
<comment type="pathway">
    <text evidence="1">Carbohydrate degradation; glycolysis; D-glyceraldehyde 3-phosphate from glycerone phosphate: step 1/1.</text>
</comment>
<comment type="subunit">
    <text evidence="1">Homodimer.</text>
</comment>
<comment type="subcellular location">
    <subcellularLocation>
        <location evidence="1">Cytoplasm</location>
    </subcellularLocation>
</comment>
<comment type="similarity">
    <text evidence="1">Belongs to the triosephosphate isomerase family.</text>
</comment>
<name>TPIS_STRT2</name>
<dbReference type="EC" id="5.3.1.1" evidence="1"/>
<dbReference type="EMBL" id="AF442549">
    <property type="protein sequence ID" value="AAL35375.1"/>
    <property type="molecule type" value="Genomic_DNA"/>
</dbReference>
<dbReference type="EMBL" id="CP000023">
    <property type="protein sequence ID" value="AAV60198.1"/>
    <property type="molecule type" value="Genomic_DNA"/>
</dbReference>
<dbReference type="RefSeq" id="WP_002946314.1">
    <property type="nucleotide sequence ID" value="NC_006448.1"/>
</dbReference>
<dbReference type="SMR" id="Q8VVC1"/>
<dbReference type="STRING" id="264199.stu0488"/>
<dbReference type="GeneID" id="66898398"/>
<dbReference type="KEGG" id="stl:stu0488"/>
<dbReference type="eggNOG" id="COG0149">
    <property type="taxonomic scope" value="Bacteria"/>
</dbReference>
<dbReference type="HOGENOM" id="CLU_024251_2_3_9"/>
<dbReference type="UniPathway" id="UPA00109">
    <property type="reaction ID" value="UER00189"/>
</dbReference>
<dbReference type="UniPathway" id="UPA00138"/>
<dbReference type="Proteomes" id="UP000001170">
    <property type="component" value="Chromosome"/>
</dbReference>
<dbReference type="GO" id="GO:0005829">
    <property type="term" value="C:cytosol"/>
    <property type="evidence" value="ECO:0007669"/>
    <property type="project" value="TreeGrafter"/>
</dbReference>
<dbReference type="GO" id="GO:0004807">
    <property type="term" value="F:triose-phosphate isomerase activity"/>
    <property type="evidence" value="ECO:0007669"/>
    <property type="project" value="UniProtKB-UniRule"/>
</dbReference>
<dbReference type="GO" id="GO:0006094">
    <property type="term" value="P:gluconeogenesis"/>
    <property type="evidence" value="ECO:0007669"/>
    <property type="project" value="UniProtKB-UniRule"/>
</dbReference>
<dbReference type="GO" id="GO:0046166">
    <property type="term" value="P:glyceraldehyde-3-phosphate biosynthetic process"/>
    <property type="evidence" value="ECO:0007669"/>
    <property type="project" value="TreeGrafter"/>
</dbReference>
<dbReference type="GO" id="GO:0019563">
    <property type="term" value="P:glycerol catabolic process"/>
    <property type="evidence" value="ECO:0007669"/>
    <property type="project" value="TreeGrafter"/>
</dbReference>
<dbReference type="GO" id="GO:0006096">
    <property type="term" value="P:glycolytic process"/>
    <property type="evidence" value="ECO:0007669"/>
    <property type="project" value="UniProtKB-UniRule"/>
</dbReference>
<dbReference type="CDD" id="cd00311">
    <property type="entry name" value="TIM"/>
    <property type="match status" value="1"/>
</dbReference>
<dbReference type="FunFam" id="3.20.20.70:FF:000016">
    <property type="entry name" value="Triosephosphate isomerase"/>
    <property type="match status" value="1"/>
</dbReference>
<dbReference type="Gene3D" id="3.20.20.70">
    <property type="entry name" value="Aldolase class I"/>
    <property type="match status" value="1"/>
</dbReference>
<dbReference type="HAMAP" id="MF_00147_B">
    <property type="entry name" value="TIM_B"/>
    <property type="match status" value="1"/>
</dbReference>
<dbReference type="InterPro" id="IPR013785">
    <property type="entry name" value="Aldolase_TIM"/>
</dbReference>
<dbReference type="InterPro" id="IPR035990">
    <property type="entry name" value="TIM_sf"/>
</dbReference>
<dbReference type="InterPro" id="IPR022896">
    <property type="entry name" value="TrioseP_Isoase_bac/euk"/>
</dbReference>
<dbReference type="InterPro" id="IPR000652">
    <property type="entry name" value="Triosephosphate_isomerase"/>
</dbReference>
<dbReference type="InterPro" id="IPR020861">
    <property type="entry name" value="Triosephosphate_isomerase_AS"/>
</dbReference>
<dbReference type="NCBIfam" id="TIGR00419">
    <property type="entry name" value="tim"/>
    <property type="match status" value="1"/>
</dbReference>
<dbReference type="PANTHER" id="PTHR21139">
    <property type="entry name" value="TRIOSEPHOSPHATE ISOMERASE"/>
    <property type="match status" value="1"/>
</dbReference>
<dbReference type="PANTHER" id="PTHR21139:SF42">
    <property type="entry name" value="TRIOSEPHOSPHATE ISOMERASE"/>
    <property type="match status" value="1"/>
</dbReference>
<dbReference type="Pfam" id="PF00121">
    <property type="entry name" value="TIM"/>
    <property type="match status" value="1"/>
</dbReference>
<dbReference type="SUPFAM" id="SSF51351">
    <property type="entry name" value="Triosephosphate isomerase (TIM)"/>
    <property type="match status" value="1"/>
</dbReference>
<dbReference type="PROSITE" id="PS00171">
    <property type="entry name" value="TIM_1"/>
    <property type="match status" value="1"/>
</dbReference>
<dbReference type="PROSITE" id="PS51440">
    <property type="entry name" value="TIM_2"/>
    <property type="match status" value="1"/>
</dbReference>
<feature type="chain" id="PRO_0000090303" description="Triosephosphate isomerase">
    <location>
        <begin position="1"/>
        <end position="252"/>
    </location>
</feature>
<feature type="active site" description="Electrophile" evidence="1">
    <location>
        <position position="96"/>
    </location>
</feature>
<feature type="active site" description="Proton acceptor" evidence="1">
    <location>
        <position position="168"/>
    </location>
</feature>
<feature type="binding site" evidence="1">
    <location>
        <begin position="10"/>
        <end position="12"/>
    </location>
    <ligand>
        <name>substrate</name>
    </ligand>
</feature>
<feature type="binding site" evidence="1">
    <location>
        <position position="174"/>
    </location>
    <ligand>
        <name>substrate</name>
    </ligand>
</feature>
<feature type="binding site" evidence="1">
    <location>
        <position position="214"/>
    </location>
    <ligand>
        <name>substrate</name>
    </ligand>
</feature>
<feature type="binding site" evidence="1">
    <location>
        <begin position="235"/>
        <end position="236"/>
    </location>
    <ligand>
        <name>substrate</name>
    </ligand>
</feature>
<feature type="sequence conflict" description="In Ref. 1; AAL35375." evidence="2" ref="1">
    <original>A</original>
    <variation>P</variation>
    <location>
        <position position="141"/>
    </location>
</feature>
<feature type="sequence conflict" description="In Ref. 1; AAL35375." evidence="2" ref="1">
    <original>PE</original>
    <variation>LK</variation>
    <location>
        <begin position="157"/>
        <end position="158"/>
    </location>
</feature>
<keyword id="KW-0963">Cytoplasm</keyword>
<keyword id="KW-0312">Gluconeogenesis</keyword>
<keyword id="KW-0324">Glycolysis</keyword>
<keyword id="KW-0413">Isomerase</keyword>
<keyword id="KW-1185">Reference proteome</keyword>
<organism>
    <name type="scientific">Streptococcus thermophilus (strain ATCC BAA-250 / LMG 18311)</name>
    <dbReference type="NCBI Taxonomy" id="264199"/>
    <lineage>
        <taxon>Bacteria</taxon>
        <taxon>Bacillati</taxon>
        <taxon>Bacillota</taxon>
        <taxon>Bacilli</taxon>
        <taxon>Lactobacillales</taxon>
        <taxon>Streptococcaceae</taxon>
        <taxon>Streptococcus</taxon>
    </lineage>
</organism>